<accession>Q9UUM6</accession>
<accession>O43055</accession>
<sequence>MTFENLGGHAQRRDESAYRLGEEDGRQKGESSRKKRPPLSRKNPSNVSFWSNEPIIRHSSVKTDRPQFHRADSTVTEQSSEILFDGNAESAEPLSKRSPPFLAYTPKRAVSATLATTQSSPISTSFNPQLPSNSNTNRFDFGSESQLSSNYTNDTGLSLLSLPKSVPHSPAMHKRTPSSDPNNPFGSTFANKFLDHIPAEPLPLPARPQISDLSFFRKPSLPSALQNIVIEKNASQRSVSEPLHNLSSRYSHFTSPHIDDSQHFPPMEFFARSDELPNPFVPFFDLDSKPNLSTLQDNASLTSQGSNLSSQNSGLSSSSSGIFGRMPIPAQSLDTTMLRTDSNSNIRRATTSFIANSEKENSSNFIDPQKYASIKFKNGNGVSKFMFLFTFGIVFPPLWILASFLPIPRTKIHQMRVKHVHWRIINRVVACLGVAITFLFIGLGVSG</sequence>
<comment type="subcellular location">
    <subcellularLocation>
        <location evidence="3">Membrane</location>
        <topology evidence="3">Multi-pass membrane protein</topology>
    </subcellularLocation>
</comment>
<proteinExistence type="predicted"/>
<reference key="1">
    <citation type="journal article" date="2002" name="Nature">
        <title>The genome sequence of Schizosaccharomyces pombe.</title>
        <authorList>
            <person name="Wood V."/>
            <person name="Gwilliam R."/>
            <person name="Rajandream M.A."/>
            <person name="Lyne M.H."/>
            <person name="Lyne R."/>
            <person name="Stewart A."/>
            <person name="Sgouros J.G."/>
            <person name="Peat N."/>
            <person name="Hayles J."/>
            <person name="Baker S.G."/>
            <person name="Basham D."/>
            <person name="Bowman S."/>
            <person name="Brooks K."/>
            <person name="Brown D."/>
            <person name="Brown S."/>
            <person name="Chillingworth T."/>
            <person name="Churcher C.M."/>
            <person name="Collins M."/>
            <person name="Connor R."/>
            <person name="Cronin A."/>
            <person name="Davis P."/>
            <person name="Feltwell T."/>
            <person name="Fraser A."/>
            <person name="Gentles S."/>
            <person name="Goble A."/>
            <person name="Hamlin N."/>
            <person name="Harris D.E."/>
            <person name="Hidalgo J."/>
            <person name="Hodgson G."/>
            <person name="Holroyd S."/>
            <person name="Hornsby T."/>
            <person name="Howarth S."/>
            <person name="Huckle E.J."/>
            <person name="Hunt S."/>
            <person name="Jagels K."/>
            <person name="James K.D."/>
            <person name="Jones L."/>
            <person name="Jones M."/>
            <person name="Leather S."/>
            <person name="McDonald S."/>
            <person name="McLean J."/>
            <person name="Mooney P."/>
            <person name="Moule S."/>
            <person name="Mungall K.L."/>
            <person name="Murphy L.D."/>
            <person name="Niblett D."/>
            <person name="Odell C."/>
            <person name="Oliver K."/>
            <person name="O'Neil S."/>
            <person name="Pearson D."/>
            <person name="Quail M.A."/>
            <person name="Rabbinowitsch E."/>
            <person name="Rutherford K.M."/>
            <person name="Rutter S."/>
            <person name="Saunders D."/>
            <person name="Seeger K."/>
            <person name="Sharp S."/>
            <person name="Skelton J."/>
            <person name="Simmonds M.N."/>
            <person name="Squares R."/>
            <person name="Squares S."/>
            <person name="Stevens K."/>
            <person name="Taylor K."/>
            <person name="Taylor R.G."/>
            <person name="Tivey A."/>
            <person name="Walsh S.V."/>
            <person name="Warren T."/>
            <person name="Whitehead S."/>
            <person name="Woodward J.R."/>
            <person name="Volckaert G."/>
            <person name="Aert R."/>
            <person name="Robben J."/>
            <person name="Grymonprez B."/>
            <person name="Weltjens I."/>
            <person name="Vanstreels E."/>
            <person name="Rieger M."/>
            <person name="Schaefer M."/>
            <person name="Mueller-Auer S."/>
            <person name="Gabel C."/>
            <person name="Fuchs M."/>
            <person name="Duesterhoeft A."/>
            <person name="Fritzc C."/>
            <person name="Holzer E."/>
            <person name="Moestl D."/>
            <person name="Hilbert H."/>
            <person name="Borzym K."/>
            <person name="Langer I."/>
            <person name="Beck A."/>
            <person name="Lehrach H."/>
            <person name="Reinhardt R."/>
            <person name="Pohl T.M."/>
            <person name="Eger P."/>
            <person name="Zimmermann W."/>
            <person name="Wedler H."/>
            <person name="Wambutt R."/>
            <person name="Purnelle B."/>
            <person name="Goffeau A."/>
            <person name="Cadieu E."/>
            <person name="Dreano S."/>
            <person name="Gloux S."/>
            <person name="Lelaure V."/>
            <person name="Mottier S."/>
            <person name="Galibert F."/>
            <person name="Aves S.J."/>
            <person name="Xiang Z."/>
            <person name="Hunt C."/>
            <person name="Moore K."/>
            <person name="Hurst S.M."/>
            <person name="Lucas M."/>
            <person name="Rochet M."/>
            <person name="Gaillardin C."/>
            <person name="Tallada V.A."/>
            <person name="Garzon A."/>
            <person name="Thode G."/>
            <person name="Daga R.R."/>
            <person name="Cruzado L."/>
            <person name="Jimenez J."/>
            <person name="Sanchez M."/>
            <person name="del Rey F."/>
            <person name="Benito J."/>
            <person name="Dominguez A."/>
            <person name="Revuelta J.L."/>
            <person name="Moreno S."/>
            <person name="Armstrong J."/>
            <person name="Forsburg S.L."/>
            <person name="Cerutti L."/>
            <person name="Lowe T."/>
            <person name="McCombie W.R."/>
            <person name="Paulsen I."/>
            <person name="Potashkin J."/>
            <person name="Shpakovski G.V."/>
            <person name="Ussery D."/>
            <person name="Barrell B.G."/>
            <person name="Nurse P."/>
        </authorList>
    </citation>
    <scope>NUCLEOTIDE SEQUENCE [LARGE SCALE GENOMIC DNA]</scope>
    <source>
        <strain>972 / ATCC 24843</strain>
    </source>
</reference>
<keyword id="KW-0472">Membrane</keyword>
<keyword id="KW-1185">Reference proteome</keyword>
<keyword id="KW-0812">Transmembrane</keyword>
<keyword id="KW-1133">Transmembrane helix</keyword>
<protein>
    <recommendedName>
        <fullName>Uncharacterized protein C405.02c</fullName>
    </recommendedName>
</protein>
<evidence type="ECO:0000255" key="1"/>
<evidence type="ECO:0000256" key="2">
    <source>
        <dbReference type="SAM" id="MobiDB-lite"/>
    </source>
</evidence>
<evidence type="ECO:0000305" key="3"/>
<gene>
    <name type="ORF">SPBC405.02c</name>
</gene>
<dbReference type="EMBL" id="CU329671">
    <property type="protein sequence ID" value="CAA16822.2"/>
    <property type="molecule type" value="Genomic_DNA"/>
</dbReference>
<dbReference type="RefSeq" id="NP_596305.2">
    <property type="nucleotide sequence ID" value="NM_001022226.3"/>
</dbReference>
<dbReference type="BioGRID" id="277538">
    <property type="interactions" value="1"/>
</dbReference>
<dbReference type="iPTMnet" id="Q9UUM6"/>
<dbReference type="SwissPalm" id="Q9UUM6"/>
<dbReference type="PaxDb" id="4896-SPBC405.02c.1"/>
<dbReference type="EnsemblFungi" id="SPBC405.02c.1">
    <property type="protein sequence ID" value="SPBC405.02c.1:pep"/>
    <property type="gene ID" value="SPBC405.02c"/>
</dbReference>
<dbReference type="KEGG" id="spo:2541023"/>
<dbReference type="PomBase" id="SPBC405.02c"/>
<dbReference type="VEuPathDB" id="FungiDB:SPBC405.02c"/>
<dbReference type="HOGENOM" id="CLU_638026_0_0_1"/>
<dbReference type="InParanoid" id="Q9UUM6"/>
<dbReference type="OMA" id="KTDRPHF"/>
<dbReference type="PRO" id="PR:Q9UUM6"/>
<dbReference type="Proteomes" id="UP000002485">
    <property type="component" value="Chromosome II"/>
</dbReference>
<dbReference type="GO" id="GO:0016020">
    <property type="term" value="C:membrane"/>
    <property type="evidence" value="ECO:0007669"/>
    <property type="project" value="UniProtKB-SubCell"/>
</dbReference>
<organism>
    <name type="scientific">Schizosaccharomyces pombe (strain 972 / ATCC 24843)</name>
    <name type="common">Fission yeast</name>
    <dbReference type="NCBI Taxonomy" id="284812"/>
    <lineage>
        <taxon>Eukaryota</taxon>
        <taxon>Fungi</taxon>
        <taxon>Dikarya</taxon>
        <taxon>Ascomycota</taxon>
        <taxon>Taphrinomycotina</taxon>
        <taxon>Schizosaccharomycetes</taxon>
        <taxon>Schizosaccharomycetales</taxon>
        <taxon>Schizosaccharomycetaceae</taxon>
        <taxon>Schizosaccharomyces</taxon>
    </lineage>
</organism>
<name>YGF2_SCHPO</name>
<feature type="chain" id="PRO_0000373867" description="Uncharacterized protein C405.02c">
    <location>
        <begin position="1"/>
        <end position="447"/>
    </location>
</feature>
<feature type="transmembrane region" description="Helical" evidence="1">
    <location>
        <begin position="385"/>
        <end position="405"/>
    </location>
</feature>
<feature type="transmembrane region" description="Helical" evidence="1">
    <location>
        <begin position="424"/>
        <end position="444"/>
    </location>
</feature>
<feature type="region of interest" description="Disordered" evidence="2">
    <location>
        <begin position="1"/>
        <end position="80"/>
    </location>
</feature>
<feature type="region of interest" description="Disordered" evidence="2">
    <location>
        <begin position="115"/>
        <end position="184"/>
    </location>
</feature>
<feature type="region of interest" description="Disordered" evidence="2">
    <location>
        <begin position="295"/>
        <end position="322"/>
    </location>
</feature>
<feature type="compositionally biased region" description="Basic and acidic residues" evidence="2">
    <location>
        <begin position="11"/>
        <end position="32"/>
    </location>
</feature>
<feature type="compositionally biased region" description="Polar residues" evidence="2">
    <location>
        <begin position="42"/>
        <end position="51"/>
    </location>
</feature>
<feature type="compositionally biased region" description="Basic and acidic residues" evidence="2">
    <location>
        <begin position="61"/>
        <end position="72"/>
    </location>
</feature>
<feature type="compositionally biased region" description="Polar residues" evidence="2">
    <location>
        <begin position="115"/>
        <end position="158"/>
    </location>
</feature>
<feature type="compositionally biased region" description="Low complexity" evidence="2">
    <location>
        <begin position="300"/>
        <end position="321"/>
    </location>
</feature>